<gene>
    <name evidence="1" type="primary">rpsM</name>
    <name type="ordered locus">PAM_225</name>
</gene>
<reference key="1">
    <citation type="journal article" date="2004" name="Nat. Genet.">
        <title>Reductive evolution suggested from the complete genome sequence of a plant-pathogenic phytoplasma.</title>
        <authorList>
            <person name="Oshima K."/>
            <person name="Kakizawa S."/>
            <person name="Nishigawa H."/>
            <person name="Jung H.-Y."/>
            <person name="Wei W."/>
            <person name="Suzuki S."/>
            <person name="Arashida R."/>
            <person name="Nakata D."/>
            <person name="Miyata S."/>
            <person name="Ugaki M."/>
            <person name="Namba S."/>
        </authorList>
    </citation>
    <scope>NUCLEOTIDE SEQUENCE [LARGE SCALE GENOMIC DNA]</scope>
    <source>
        <strain>OY-M</strain>
    </source>
</reference>
<sequence length="121" mass="13696">MARIAGIDIPSDKRVVIALTYIYGLGNKLSHKILNELNIDQNIRVKNLTEQQLSALRSEITKYNVEGDLRREVTLNIKRLMEIGAYRGLRHRKGLPVRGQKTRNNAHTVKGKPKAIAGKKK</sequence>
<protein>
    <recommendedName>
        <fullName evidence="1">Small ribosomal subunit protein uS13</fullName>
    </recommendedName>
    <alternativeName>
        <fullName evidence="3">30S ribosomal protein S13</fullName>
    </alternativeName>
</protein>
<name>RS13_ONYPE</name>
<dbReference type="EMBL" id="AP006628">
    <property type="protein sequence ID" value="BAD04310.1"/>
    <property type="molecule type" value="Genomic_DNA"/>
</dbReference>
<dbReference type="SMR" id="Q6YQZ7"/>
<dbReference type="STRING" id="262768.PAM_225"/>
<dbReference type="KEGG" id="poy:PAM_225"/>
<dbReference type="eggNOG" id="COG0099">
    <property type="taxonomic scope" value="Bacteria"/>
</dbReference>
<dbReference type="HOGENOM" id="CLU_103849_1_1_14"/>
<dbReference type="BioCyc" id="OYEL262768:G1G26-271-MONOMER"/>
<dbReference type="Proteomes" id="UP000002523">
    <property type="component" value="Chromosome"/>
</dbReference>
<dbReference type="GO" id="GO:0005829">
    <property type="term" value="C:cytosol"/>
    <property type="evidence" value="ECO:0007669"/>
    <property type="project" value="TreeGrafter"/>
</dbReference>
<dbReference type="GO" id="GO:0015935">
    <property type="term" value="C:small ribosomal subunit"/>
    <property type="evidence" value="ECO:0007669"/>
    <property type="project" value="TreeGrafter"/>
</dbReference>
<dbReference type="GO" id="GO:0019843">
    <property type="term" value="F:rRNA binding"/>
    <property type="evidence" value="ECO:0007669"/>
    <property type="project" value="UniProtKB-UniRule"/>
</dbReference>
<dbReference type="GO" id="GO:0003735">
    <property type="term" value="F:structural constituent of ribosome"/>
    <property type="evidence" value="ECO:0007669"/>
    <property type="project" value="InterPro"/>
</dbReference>
<dbReference type="GO" id="GO:0000049">
    <property type="term" value="F:tRNA binding"/>
    <property type="evidence" value="ECO:0007669"/>
    <property type="project" value="UniProtKB-UniRule"/>
</dbReference>
<dbReference type="GO" id="GO:0006412">
    <property type="term" value="P:translation"/>
    <property type="evidence" value="ECO:0007669"/>
    <property type="project" value="UniProtKB-UniRule"/>
</dbReference>
<dbReference type="FunFam" id="1.10.8.50:FF:000001">
    <property type="entry name" value="30S ribosomal protein S13"/>
    <property type="match status" value="1"/>
</dbReference>
<dbReference type="FunFam" id="4.10.910.10:FF:000001">
    <property type="entry name" value="30S ribosomal protein S13"/>
    <property type="match status" value="1"/>
</dbReference>
<dbReference type="Gene3D" id="1.10.8.50">
    <property type="match status" value="1"/>
</dbReference>
<dbReference type="Gene3D" id="4.10.910.10">
    <property type="entry name" value="30s ribosomal protein s13, domain 2"/>
    <property type="match status" value="1"/>
</dbReference>
<dbReference type="HAMAP" id="MF_01315">
    <property type="entry name" value="Ribosomal_uS13"/>
    <property type="match status" value="1"/>
</dbReference>
<dbReference type="InterPro" id="IPR027437">
    <property type="entry name" value="Rbsml_uS13_C"/>
</dbReference>
<dbReference type="InterPro" id="IPR001892">
    <property type="entry name" value="Ribosomal_uS13"/>
</dbReference>
<dbReference type="InterPro" id="IPR010979">
    <property type="entry name" value="Ribosomal_uS13-like_H2TH"/>
</dbReference>
<dbReference type="InterPro" id="IPR019980">
    <property type="entry name" value="Ribosomal_uS13_bac-type"/>
</dbReference>
<dbReference type="InterPro" id="IPR018269">
    <property type="entry name" value="Ribosomal_uS13_CS"/>
</dbReference>
<dbReference type="NCBIfam" id="TIGR03631">
    <property type="entry name" value="uS13_bact"/>
    <property type="match status" value="1"/>
</dbReference>
<dbReference type="PANTHER" id="PTHR10871">
    <property type="entry name" value="30S RIBOSOMAL PROTEIN S13/40S RIBOSOMAL PROTEIN S18"/>
    <property type="match status" value="1"/>
</dbReference>
<dbReference type="PANTHER" id="PTHR10871:SF1">
    <property type="entry name" value="SMALL RIBOSOMAL SUBUNIT PROTEIN US13M"/>
    <property type="match status" value="1"/>
</dbReference>
<dbReference type="Pfam" id="PF00416">
    <property type="entry name" value="Ribosomal_S13"/>
    <property type="match status" value="1"/>
</dbReference>
<dbReference type="PIRSF" id="PIRSF002134">
    <property type="entry name" value="Ribosomal_S13"/>
    <property type="match status" value="1"/>
</dbReference>
<dbReference type="SUPFAM" id="SSF46946">
    <property type="entry name" value="S13-like H2TH domain"/>
    <property type="match status" value="1"/>
</dbReference>
<dbReference type="PROSITE" id="PS00646">
    <property type="entry name" value="RIBOSOMAL_S13_1"/>
    <property type="match status" value="1"/>
</dbReference>
<dbReference type="PROSITE" id="PS50159">
    <property type="entry name" value="RIBOSOMAL_S13_2"/>
    <property type="match status" value="1"/>
</dbReference>
<accession>Q6YQZ7</accession>
<evidence type="ECO:0000255" key="1">
    <source>
        <dbReference type="HAMAP-Rule" id="MF_01315"/>
    </source>
</evidence>
<evidence type="ECO:0000256" key="2">
    <source>
        <dbReference type="SAM" id="MobiDB-lite"/>
    </source>
</evidence>
<evidence type="ECO:0000305" key="3"/>
<comment type="function">
    <text evidence="1">Located at the top of the head of the 30S subunit, it contacts several helices of the 16S rRNA. In the 70S ribosome it contacts the 23S rRNA (bridge B1a) and protein L5 of the 50S subunit (bridge B1b), connecting the 2 subunits; these bridges are implicated in subunit movement. Contacts the tRNAs in the A and P-sites.</text>
</comment>
<comment type="subunit">
    <text evidence="1">Part of the 30S ribosomal subunit. Forms a loose heterodimer with protein S19. Forms two bridges to the 50S subunit in the 70S ribosome.</text>
</comment>
<comment type="similarity">
    <text evidence="1">Belongs to the universal ribosomal protein uS13 family.</text>
</comment>
<feature type="chain" id="PRO_0000230536" description="Small ribosomal subunit protein uS13">
    <location>
        <begin position="1"/>
        <end position="121"/>
    </location>
</feature>
<feature type="region of interest" description="Disordered" evidence="2">
    <location>
        <begin position="94"/>
        <end position="121"/>
    </location>
</feature>
<feature type="compositionally biased region" description="Basic residues" evidence="2">
    <location>
        <begin position="109"/>
        <end position="121"/>
    </location>
</feature>
<organism>
    <name type="scientific">Onion yellows phytoplasma (strain OY-M)</name>
    <dbReference type="NCBI Taxonomy" id="262768"/>
    <lineage>
        <taxon>Bacteria</taxon>
        <taxon>Bacillati</taxon>
        <taxon>Mycoplasmatota</taxon>
        <taxon>Mollicutes</taxon>
        <taxon>Acholeplasmatales</taxon>
        <taxon>Acholeplasmataceae</taxon>
        <taxon>Candidatus Phytoplasma</taxon>
        <taxon>16SrI (Aster yellows group)</taxon>
    </lineage>
</organism>
<keyword id="KW-0687">Ribonucleoprotein</keyword>
<keyword id="KW-0689">Ribosomal protein</keyword>
<keyword id="KW-0694">RNA-binding</keyword>
<keyword id="KW-0699">rRNA-binding</keyword>
<keyword id="KW-0820">tRNA-binding</keyword>
<proteinExistence type="inferred from homology"/>